<comment type="function">
    <text evidence="4 5 6 8 10 21">Snake venom phospholipase A2 (PLA2) homolog that lacks enzymatic activity. Shows high myotoxin activities (PubMed:16442348, PubMed:31748642, PubMed:9637370). Also shows neurotoxicity, since it induces muscle paralysis when tested on mouse phrenic-diaphragm preparations (PubMed:16442348, PubMed:23810946, PubMed:26457430, PubMed:30679550). Displays edema-inducing activities (PubMed:16442348, PubMed:26457430, PubMed:9637370). Also displays antimicrobial activity against E.coli and C.albicans, as well as antitumoral activity against some human and mice cell lines (PubMed:16442348). In addition, it is effective as parasiticidal agent against Leishmania sp. and S.mansoni (PubMed:16442348). It also disrupts negatively charged liposomes in a dose- and temperature-dependent manner and shows toxicity by intraperitoneal route (PubMed:16442348). In contrast to other phospholipase A2-like toxins, this myotoxin does not require fatty acid binding to be active (PubMed:29287778).</text>
</comment>
<comment type="activity regulation">
    <text evidence="6 8 10">Myotoxic activity is inhibited by suramin and rosmarinic acid (PubMed:26457430, PubMed:30679550). Cytotoxic and myotoxic activities are inhibited by pre-incubation with varespladib (PubMed:31748642). Suramin inhibits this myotoxin by (i) direct blockage of the MDoS and MDiS, preventing the toxin/membrane interaction and disruption and (ii) formation of an oligomeric complex, resulting in a tetrameric configuration for which both MDoS and MDiS becomes physically inaccessible, thus avoiding any possibility of toxin-membrane interaction or disruption (PubMed:26457430). Heparin completely inhibits the cytotoxic and bactericidal activities, but only partially the myotoxic, edema-inducing and lethal effects (PubMed:9637370).</text>
</comment>
<comment type="subunit">
    <text evidence="6 7 8 11">Homodimer; non-covalently linked (probable alternative/compact dimer conformation) (PubMed:26457430, PubMed:29287778, PubMed:30679550, Ref.4).</text>
</comment>
<comment type="subcellular location">
    <subcellularLocation>
        <location evidence="10">Secreted</location>
    </subcellularLocation>
</comment>
<comment type="tissue specificity">
    <text evidence="22">Expressed by the venom gland.</text>
</comment>
<comment type="miscellaneous">
    <text evidence="10">Lacks hemorrhagic, anticoagulant and coagulant activities.</text>
</comment>
<comment type="similarity">
    <text evidence="19">Belongs to the phospholipase A2 family. Group II subfamily. K49 sub-subfamily.</text>
</comment>
<comment type="caution">
    <text evidence="19">Does not bind calcium as one of the calcium-binding sites is lost (Asp-&gt;Lys in position 48, which corresponds to 'Lys-49' in the current nomenclature).</text>
</comment>
<reference key="1">
    <citation type="journal article" date="2006" name="Comp. Biochem. Physiol.">
        <title>Bothrops moojeni myotoxin-II, a Lys49-phospholipase A2 homologue: an example of function versatility of snake venom proteins.</title>
        <authorList>
            <person name="Stabeli R.G."/>
            <person name="Amui S.F."/>
            <person name="Sant'Ana C.D."/>
            <person name="Pires M.G."/>
            <person name="Nomizo A."/>
            <person name="Monteiro M.C."/>
            <person name="Romao P.R.T."/>
            <person name="Guerra-Sa R."/>
            <person name="Vieira C.A."/>
            <person name="Giglio J.R."/>
            <person name="Fontes M.R.M."/>
            <person name="Soares A.M."/>
        </authorList>
    </citation>
    <scope>NUCLEOTIDE SEQUENCE [MRNA]</scope>
    <scope>FUNCTION</scope>
    <scope>ACTIVITY REGULATION</scope>
    <source>
        <tissue>Venom</tissue>
        <tissue>Venom gland</tissue>
    </source>
</reference>
<reference key="2">
    <citation type="journal article" date="1998" name="Toxicon">
        <title>A rapid procedure for the isolation of the Lys-49 myotoxin II from Bothrops moojeni (caissaca) venom: biochemical characterization, crystallization, myotoxic and edematogenic activity.</title>
        <authorList>
            <person name="Soares A.M."/>
            <person name="Rodrigues V.M."/>
            <person name="Homsi-Brandeburgo M.I."/>
            <person name="Toyama M.H."/>
            <person name="Lombardi F.R."/>
            <person name="Arni R.K."/>
            <person name="Giglio J.R."/>
        </authorList>
    </citation>
    <scope>PROTEIN SEQUENCE OF 1-52</scope>
    <scope>FUNCTION</scope>
    <scope>SUBCELLULAR LOCATION</scope>
    <source>
        <tissue>Venom</tissue>
    </source>
</reference>
<reference key="3">
    <citation type="submission" date="1999-04" db="EMBL/GenBank/DDBJ databases">
        <authorList>
            <person name="Soares A.M."/>
            <person name="Ward R.J."/>
            <person name="Rodrigues-Simioni L."/>
            <person name="Lomonte B."/>
            <person name="Gutierrez J.M."/>
            <person name="Guerra-Sa R."/>
            <person name="Rodrigues V."/>
            <person name="Fontes M.R.M."/>
            <person name="Arni R.K."/>
            <person name="Giglio J.R."/>
        </authorList>
    </citation>
    <scope>NUCLEOTIDE SEQUENCE [MRNA] OF 15-122</scope>
    <source>
        <tissue>Venom gland</tissue>
    </source>
</reference>
<reference key="4">
    <citation type="journal article" date="1997" name="Protein Pept. Lett.">
        <title>Crystal structure of myotoxin-II: a myotoxic phospholipase A2 homologue from Bothrops moojeni venom.</title>
        <authorList>
            <person name="de Azevedo W.F. Jr."/>
            <person name="Ward R.J."/>
            <person name="Lombardi F.R."/>
            <person name="Giglio J.R."/>
            <person name="Soares A.M."/>
            <person name="Fontes M.R.M."/>
            <person name="Arni R.K."/>
        </authorList>
    </citation>
    <scope>X-RAY CRYSTALLOGRAPHY (2.0 ANGSTROMS)</scope>
    <scope>SUBUNIT</scope>
    <source>
        <tissue>Venom</tissue>
    </source>
</reference>
<reference evidence="23" key="5">
    <citation type="journal article" date="2005" name="Biochimie">
        <title>Structural insights for fatty acid binding in a Lys49-phospholipase A2: crystal structure of myotoxin II from Bothrops moojeni complexed with stearic acid.</title>
        <authorList>
            <person name="Watanabe L."/>
            <person name="Soares A.M."/>
            <person name="Ward R.J."/>
            <person name="Fontes M.R."/>
            <person name="Arni R.K."/>
        </authorList>
    </citation>
    <scope>X-RAY CRYSTALLOGRAPHY (1.8 ANGSTROMS) OF 1-122</scope>
    <scope>DISULFIDE BONDS</scope>
</reference>
<reference evidence="24" key="6">
    <citation type="journal article" date="2013" name="Toxicon">
        <title>Structural and functional studies with mytoxin II from Bothrops moojeni reveal remarkable similarities and differences compared to other catalytically inactive phospholipases A(2)-like.</title>
        <authorList>
            <person name="Salvador G.H."/>
            <person name="Cavalcante W.L."/>
            <person name="Dos Santos J.I."/>
            <person name="Gallacci M."/>
            <person name="Soares A.M."/>
            <person name="Fontes M.R."/>
        </authorList>
    </citation>
    <scope>X-RAY CRYSTALLOGRAPHY (1.92 ANGSTROMS) OF 1-122</scope>
    <scope>FUNCTION</scope>
    <scope>DISULFIDE BONDS</scope>
</reference>
<reference evidence="25" key="7">
    <citation type="journal article" date="2015" name="Acta Crystallogr. D">
        <title>Structural and functional evidence for membrane docking and disruption sites on phospholipase A2-like proteins revealed by complexation with the inhibitor suramin.</title>
        <authorList>
            <person name="Salvador G.H."/>
            <person name="Dreyer T.R."/>
            <person name="Cavalcante W.L."/>
            <person name="Matioli F.F."/>
            <person name="Dos Santos J.I."/>
            <person name="Velazquez-Campoy A."/>
            <person name="Gallacci M."/>
            <person name="Fontes M.R."/>
        </authorList>
    </citation>
    <scope>X-RAY CRYSTALLOGRAPHY (1.9 ANGSTROMS) OF 1-122 IN COMPLEX WITH SURAMIN</scope>
    <scope>FUNCTION</scope>
    <scope>ACTIVITY REGULATION</scope>
    <scope>SUBUNIT</scope>
    <scope>DISULFIDE BONDS</scope>
</reference>
<reference evidence="26 27 28 29" key="8">
    <citation type="journal article" date="2018" name="Biochim. Biophys. Acta">
        <title>Structural evidence for a fatty acid-independent myotoxic mechanism for a phospholipase A2-like toxin.</title>
        <authorList>
            <person name="Salvador G.H.M."/>
            <person name="Dos Santos J.I."/>
            <person name="Borges R.J."/>
            <person name="Fontes M.R.M."/>
        </authorList>
    </citation>
    <scope>X-RAY CRYSTALLOGRAPHY (1.7 ANGSTROMS) OF 1-122 ALONE AND IN COMPLEX WITH FATTY ACIDS</scope>
    <scope>DISULFIDE BONDS</scope>
    <scope>SUBUNIT</scope>
</reference>
<reference evidence="30 31" key="9">
    <citation type="journal article" date="2019" name="Sci. Rep.">
        <title>Search for efficient inhibitors of myotoxic activity induced by ophidian phospholipase A2-like proteins using functional, structural and bioinformatics approaches.</title>
        <authorList>
            <person name="Salvador G.H.M."/>
            <person name="Cardoso F.F."/>
            <person name="Gomes A.A."/>
            <person name="Cavalcante W.L.G."/>
            <person name="Gallacci M."/>
            <person name="Fontes M.R.M."/>
        </authorList>
    </citation>
    <scope>X-RAY CRYSTALLOGRAPHY (1.6 ANGSTROMS) OF 1-122 IN COMPLEX WITH ACETYLSALICYLIC ACID AND ROSMARINIC ACID</scope>
    <scope>FUNCTION</scope>
    <scope>ACTIVITY REGULATION</scope>
    <scope>SUBUNIT</scope>
    <scope>DISULFIDE BONDS</scope>
</reference>
<reference evidence="32" key="10">
    <citation type="journal article" date="2019" name="Sci. Rep.">
        <title>Structural basis for phospholipase A2-like toxin inhibition by the synthetic compound Varespladib (LY315920).</title>
        <authorList>
            <person name="Salvador G.H.M."/>
            <person name="Gomes A.A.S."/>
            <person name="Bryan-Quiros W."/>
            <person name="Fernandez J."/>
            <person name="Lewin M.R."/>
            <person name="Gutierrez J.M."/>
            <person name="Lomonte B."/>
            <person name="Fontes M.R.M."/>
        </authorList>
    </citation>
    <scope>X-RAY CRYSTALLOGRAPHY (1.75 ANGSTROMS) IN COMPLEX WITH VARESPLADIB</scope>
    <scope>FUNCTION</scope>
    <scope>DISULFIDE BONDS</scope>
</reference>
<keyword id="KW-0002">3D-structure</keyword>
<keyword id="KW-0044">Antibiotic</keyword>
<keyword id="KW-0929">Antimicrobial</keyword>
<keyword id="KW-0903">Direct protein sequencing</keyword>
<keyword id="KW-1015">Disulfide bond</keyword>
<keyword id="KW-0295">Fungicide</keyword>
<keyword id="KW-0959">Myotoxin</keyword>
<keyword id="KW-0528">Neurotoxin</keyword>
<keyword id="KW-0629">Postsynaptic neurotoxin</keyword>
<keyword id="KW-0964">Secreted</keyword>
<keyword id="KW-0800">Toxin</keyword>
<name>PA2H2_BOTMO</name>
<accession>Q9I834</accession>
<proteinExistence type="evidence at protein level"/>
<sequence length="122" mass="13887">SLFELGKMILQETGKNPAKSYGVYGCNCGVGGRGKPKDATDRCCYVHKCCYKKLTGCDPKKDRYSYSWKDKTIVCGENNSCLKELCECDKAVAICLRENLDTYNKKYRYNYLKPFCKKADPC</sequence>
<feature type="chain" id="PRO_0000161624" description="Basic phospholipase A2 homolog myotoxin II" evidence="20">
    <location>
        <begin position="1"/>
        <end position="122"/>
    </location>
</feature>
<feature type="region of interest" description="Important for membrane-damaging activities in eukaryotes and bacteria; heparin-binding" evidence="2">
    <location>
        <begin position="105"/>
        <end position="118"/>
    </location>
</feature>
<feature type="site" description="Cationic membrane-docking site (MDoS)" evidence="21">
    <location>
        <position position="15"/>
    </location>
</feature>
<feature type="site" description="Cationic membrane-docking site (MDoS)" evidence="21">
    <location>
        <position position="19"/>
    </location>
</feature>
<feature type="site" description="Important residue of the cationic membrane-docking site (MDoS)" evidence="1 21">
    <location>
        <position position="105"/>
    </location>
</feature>
<feature type="site" description="Important residue of the cationic membrane-docking site (MDoS)" evidence="1 21">
    <location>
        <position position="108"/>
    </location>
</feature>
<feature type="site" description="Hydrophobic membrane-disruption site (MDiS)" evidence="1">
    <location>
        <position position="112"/>
    </location>
</feature>
<feature type="site" description="Cationic membrane-docking site (MDoS)" evidence="1">
    <location>
        <position position="113"/>
    </location>
</feature>
<feature type="site" description="Hydrophobic membrane-disruption site (MDiS)" evidence="1">
    <location>
        <position position="115"/>
    </location>
</feature>
<feature type="site" description="Cationic membrane-docking site (MDoS)" evidence="1">
    <location>
        <position position="118"/>
    </location>
</feature>
<feature type="disulfide bond" evidence="3 5 6 7 8 9 33 34 35 36 37 38 39 40 41 42">
    <location>
        <begin position="26"/>
        <end position="116"/>
    </location>
</feature>
<feature type="disulfide bond" evidence="3 5 6 7 8 9 33 34 35 36 37 38 39 40 41 42">
    <location>
        <begin position="28"/>
        <end position="44"/>
    </location>
</feature>
<feature type="disulfide bond" evidence="3 5 6 7 8 9 33 34 35 36 37 38 39 40 41 42">
    <location>
        <begin position="43"/>
        <end position="95"/>
    </location>
</feature>
<feature type="disulfide bond" evidence="3 5 6 7 8 9 33 34 35 36 37 38 39 40 41 42">
    <location>
        <begin position="49"/>
        <end position="122"/>
    </location>
</feature>
<feature type="disulfide bond" evidence="3 5 6 7 8 9 33 34 35 36 37 38 39 40 41 42">
    <location>
        <begin position="50"/>
        <end position="88"/>
    </location>
</feature>
<feature type="disulfide bond" evidence="3 5 6 7 8 9 33 34 35 36 37 38 39 40 41 42">
    <location>
        <begin position="57"/>
        <end position="81"/>
    </location>
</feature>
<feature type="disulfide bond" evidence="3 5 6 7 8 9 33 34 35 36 37 38 39 40 41 42">
    <location>
        <begin position="75"/>
        <end position="86"/>
    </location>
</feature>
<feature type="sequence conflict" description="In Ref. 3; AAF66702." evidence="19" ref="3">
    <original>A</original>
    <variation>V</variation>
    <location>
        <position position="18"/>
    </location>
</feature>
<feature type="helix" evidence="43">
    <location>
        <begin position="2"/>
        <end position="13"/>
    </location>
</feature>
<feature type="helix" evidence="43">
    <location>
        <begin position="17"/>
        <end position="21"/>
    </location>
</feature>
<feature type="turn" evidence="43">
    <location>
        <begin position="25"/>
        <end position="27"/>
    </location>
</feature>
<feature type="strand" evidence="43">
    <location>
        <begin position="28"/>
        <end position="31"/>
    </location>
</feature>
<feature type="helix" evidence="43">
    <location>
        <begin position="39"/>
        <end position="53"/>
    </location>
</feature>
<feature type="turn" evidence="43">
    <location>
        <begin position="59"/>
        <end position="61"/>
    </location>
</feature>
<feature type="strand" evidence="43">
    <location>
        <begin position="66"/>
        <end position="69"/>
    </location>
</feature>
<feature type="strand" evidence="43">
    <location>
        <begin position="72"/>
        <end position="75"/>
    </location>
</feature>
<feature type="helix" evidence="43">
    <location>
        <begin position="80"/>
        <end position="98"/>
    </location>
</feature>
<feature type="helix" evidence="43">
    <location>
        <begin position="99"/>
        <end position="102"/>
    </location>
</feature>
<feature type="helix" evidence="43">
    <location>
        <begin position="105"/>
        <end position="107"/>
    </location>
</feature>
<feature type="helix" evidence="43">
    <location>
        <begin position="113"/>
        <end position="115"/>
    </location>
</feature>
<protein>
    <recommendedName>
        <fullName evidence="12 13 17 18">Basic phospholipase A2 homolog myotoxin II</fullName>
        <shortName evidence="12 13 14 15 16">MjTX-II</shortName>
        <shortName>svPLA2 homolog</shortName>
    </recommendedName>
    <alternativeName>
        <fullName>Basic phospholipase A2 homolog 2</fullName>
    </alternativeName>
    <alternativeName>
        <fullName>M-VI</fullName>
    </alternativeName>
</protein>
<evidence type="ECO:0000250" key="1">
    <source>
        <dbReference type="UniProtKB" id="I6L8L6"/>
    </source>
</evidence>
<evidence type="ECO:0000250" key="2">
    <source>
        <dbReference type="UniProtKB" id="P24605"/>
    </source>
</evidence>
<evidence type="ECO:0000269" key="3">
    <source>
    </source>
</evidence>
<evidence type="ECO:0000269" key="4">
    <source>
    </source>
</evidence>
<evidence type="ECO:0000269" key="5">
    <source>
    </source>
</evidence>
<evidence type="ECO:0000269" key="6">
    <source>
    </source>
</evidence>
<evidence type="ECO:0000269" key="7">
    <source>
    </source>
</evidence>
<evidence type="ECO:0000269" key="8">
    <source>
    </source>
</evidence>
<evidence type="ECO:0000269" key="9">
    <source>
    </source>
</evidence>
<evidence type="ECO:0000269" key="10">
    <source>
    </source>
</evidence>
<evidence type="ECO:0000269" key="11">
    <source ref="4"/>
</evidence>
<evidence type="ECO:0000303" key="12">
    <source>
    </source>
</evidence>
<evidence type="ECO:0000303" key="13">
    <source>
    </source>
</evidence>
<evidence type="ECO:0000303" key="14">
    <source>
    </source>
</evidence>
<evidence type="ECO:0000303" key="15">
    <source>
    </source>
</evidence>
<evidence type="ECO:0000303" key="16">
    <source>
    </source>
</evidence>
<evidence type="ECO:0000303" key="17">
    <source>
    </source>
</evidence>
<evidence type="ECO:0000303" key="18">
    <source ref="4"/>
</evidence>
<evidence type="ECO:0000305" key="19"/>
<evidence type="ECO:0000305" key="20">
    <source>
    </source>
</evidence>
<evidence type="ECO:0000305" key="21">
    <source>
    </source>
</evidence>
<evidence type="ECO:0000305" key="22">
    <source>
    </source>
</evidence>
<evidence type="ECO:0000312" key="23">
    <source>
        <dbReference type="PDB" id="1XXS"/>
    </source>
</evidence>
<evidence type="ECO:0000312" key="24">
    <source>
        <dbReference type="PDB" id="4KF3"/>
    </source>
</evidence>
<evidence type="ECO:0000312" key="25">
    <source>
        <dbReference type="PDB" id="4YV5"/>
    </source>
</evidence>
<evidence type="ECO:0000312" key="26">
    <source>
        <dbReference type="PDB" id="6B80"/>
    </source>
</evidence>
<evidence type="ECO:0000312" key="27">
    <source>
        <dbReference type="PDB" id="6B81"/>
    </source>
</evidence>
<evidence type="ECO:0000312" key="28">
    <source>
        <dbReference type="PDB" id="6B83"/>
    </source>
</evidence>
<evidence type="ECO:0000312" key="29">
    <source>
        <dbReference type="PDB" id="6B84"/>
    </source>
</evidence>
<evidence type="ECO:0000312" key="30">
    <source>
        <dbReference type="PDB" id="6MQD"/>
    </source>
</evidence>
<evidence type="ECO:0000312" key="31">
    <source>
        <dbReference type="PDB" id="6MQF"/>
    </source>
</evidence>
<evidence type="ECO:0000312" key="32">
    <source>
        <dbReference type="PDB" id="6PWH"/>
    </source>
</evidence>
<evidence type="ECO:0007744" key="33">
    <source>
        <dbReference type="PDB" id="1XXS"/>
    </source>
</evidence>
<evidence type="ECO:0007744" key="34">
    <source>
        <dbReference type="PDB" id="4KF3"/>
    </source>
</evidence>
<evidence type="ECO:0007744" key="35">
    <source>
        <dbReference type="PDB" id="4YV5"/>
    </source>
</evidence>
<evidence type="ECO:0007744" key="36">
    <source>
        <dbReference type="PDB" id="6B80"/>
    </source>
</evidence>
<evidence type="ECO:0007744" key="37">
    <source>
        <dbReference type="PDB" id="6B81"/>
    </source>
</evidence>
<evidence type="ECO:0007744" key="38">
    <source>
        <dbReference type="PDB" id="6B83"/>
    </source>
</evidence>
<evidence type="ECO:0007744" key="39">
    <source>
        <dbReference type="PDB" id="6B84"/>
    </source>
</evidence>
<evidence type="ECO:0007744" key="40">
    <source>
        <dbReference type="PDB" id="6MQD"/>
    </source>
</evidence>
<evidence type="ECO:0007744" key="41">
    <source>
        <dbReference type="PDB" id="6MQF"/>
    </source>
</evidence>
<evidence type="ECO:0007744" key="42">
    <source>
        <dbReference type="PDB" id="6PWH"/>
    </source>
</evidence>
<evidence type="ECO:0007829" key="43">
    <source>
        <dbReference type="PDB" id="6MQD"/>
    </source>
</evidence>
<dbReference type="EMBL" id="AF145759">
    <property type="protein sequence ID" value="AAF66702.1"/>
    <property type="molecule type" value="mRNA"/>
</dbReference>
<dbReference type="PDB" id="1XXS">
    <property type="method" value="X-ray"/>
    <property type="resolution" value="1.80 A"/>
    <property type="chains" value="A/B=1-122"/>
</dbReference>
<dbReference type="PDB" id="4KF3">
    <property type="method" value="X-ray"/>
    <property type="resolution" value="1.92 A"/>
    <property type="chains" value="A/B=1-122"/>
</dbReference>
<dbReference type="PDB" id="4YV5">
    <property type="method" value="X-ray"/>
    <property type="resolution" value="1.90 A"/>
    <property type="chains" value="A/B=1-122"/>
</dbReference>
<dbReference type="PDB" id="6B80">
    <property type="method" value="X-ray"/>
    <property type="resolution" value="1.95 A"/>
    <property type="chains" value="A/B=1-122"/>
</dbReference>
<dbReference type="PDB" id="6B81">
    <property type="method" value="X-ray"/>
    <property type="resolution" value="1.76 A"/>
    <property type="chains" value="A/B=1-122"/>
</dbReference>
<dbReference type="PDB" id="6B83">
    <property type="method" value="X-ray"/>
    <property type="resolution" value="1.70 A"/>
    <property type="chains" value="A/B=1-122"/>
</dbReference>
<dbReference type="PDB" id="6B84">
    <property type="method" value="X-ray"/>
    <property type="resolution" value="2.00 A"/>
    <property type="chains" value="A/B=1-122"/>
</dbReference>
<dbReference type="PDB" id="6MQD">
    <property type="method" value="X-ray"/>
    <property type="resolution" value="1.60 A"/>
    <property type="chains" value="A/B=1-122"/>
</dbReference>
<dbReference type="PDB" id="6MQF">
    <property type="method" value="X-ray"/>
    <property type="resolution" value="1.69 A"/>
    <property type="chains" value="A/B=1-122"/>
</dbReference>
<dbReference type="PDB" id="6PWH">
    <property type="method" value="X-ray"/>
    <property type="resolution" value="1.75 A"/>
    <property type="chains" value="A/B=1-122"/>
</dbReference>
<dbReference type="PDBsum" id="1XXS"/>
<dbReference type="PDBsum" id="4KF3"/>
<dbReference type="PDBsum" id="4YV5"/>
<dbReference type="PDBsum" id="6B80"/>
<dbReference type="PDBsum" id="6B81"/>
<dbReference type="PDBsum" id="6B83"/>
<dbReference type="PDBsum" id="6B84"/>
<dbReference type="PDBsum" id="6MQD"/>
<dbReference type="PDBsum" id="6MQF"/>
<dbReference type="PDBsum" id="6PWH"/>
<dbReference type="SMR" id="Q9I834"/>
<dbReference type="EvolutionaryTrace" id="Q9I834"/>
<dbReference type="GO" id="GO:0005576">
    <property type="term" value="C:extracellular region"/>
    <property type="evidence" value="ECO:0007669"/>
    <property type="project" value="UniProtKB-SubCell"/>
</dbReference>
<dbReference type="GO" id="GO:0005509">
    <property type="term" value="F:calcium ion binding"/>
    <property type="evidence" value="ECO:0007669"/>
    <property type="project" value="InterPro"/>
</dbReference>
<dbReference type="GO" id="GO:0047498">
    <property type="term" value="F:calcium-dependent phospholipase A2 activity"/>
    <property type="evidence" value="ECO:0007669"/>
    <property type="project" value="TreeGrafter"/>
</dbReference>
<dbReference type="GO" id="GO:0005543">
    <property type="term" value="F:phospholipid binding"/>
    <property type="evidence" value="ECO:0007669"/>
    <property type="project" value="TreeGrafter"/>
</dbReference>
<dbReference type="GO" id="GO:0090729">
    <property type="term" value="F:toxin activity"/>
    <property type="evidence" value="ECO:0007669"/>
    <property type="project" value="UniProtKB-KW"/>
</dbReference>
<dbReference type="GO" id="GO:0050482">
    <property type="term" value="P:arachidonate secretion"/>
    <property type="evidence" value="ECO:0007669"/>
    <property type="project" value="InterPro"/>
</dbReference>
<dbReference type="GO" id="GO:0042742">
    <property type="term" value="P:defense response to bacterium"/>
    <property type="evidence" value="ECO:0007669"/>
    <property type="project" value="UniProtKB-KW"/>
</dbReference>
<dbReference type="GO" id="GO:0050832">
    <property type="term" value="P:defense response to fungus"/>
    <property type="evidence" value="ECO:0007669"/>
    <property type="project" value="UniProtKB-KW"/>
</dbReference>
<dbReference type="GO" id="GO:0031640">
    <property type="term" value="P:killing of cells of another organism"/>
    <property type="evidence" value="ECO:0007669"/>
    <property type="project" value="UniProtKB-KW"/>
</dbReference>
<dbReference type="GO" id="GO:0016042">
    <property type="term" value="P:lipid catabolic process"/>
    <property type="evidence" value="ECO:0007669"/>
    <property type="project" value="InterPro"/>
</dbReference>
<dbReference type="GO" id="GO:0042130">
    <property type="term" value="P:negative regulation of T cell proliferation"/>
    <property type="evidence" value="ECO:0007669"/>
    <property type="project" value="TreeGrafter"/>
</dbReference>
<dbReference type="GO" id="GO:0006644">
    <property type="term" value="P:phospholipid metabolic process"/>
    <property type="evidence" value="ECO:0007669"/>
    <property type="project" value="InterPro"/>
</dbReference>
<dbReference type="CDD" id="cd00125">
    <property type="entry name" value="PLA2c"/>
    <property type="match status" value="1"/>
</dbReference>
<dbReference type="FunFam" id="1.20.90.10:FF:000001">
    <property type="entry name" value="Basic phospholipase A2 homolog"/>
    <property type="match status" value="1"/>
</dbReference>
<dbReference type="Gene3D" id="1.20.90.10">
    <property type="entry name" value="Phospholipase A2 domain"/>
    <property type="match status" value="1"/>
</dbReference>
<dbReference type="InterPro" id="IPR001211">
    <property type="entry name" value="PLipase_A2"/>
</dbReference>
<dbReference type="InterPro" id="IPR033112">
    <property type="entry name" value="PLipase_A2_Asp_AS"/>
</dbReference>
<dbReference type="InterPro" id="IPR016090">
    <property type="entry name" value="PLipase_A2_dom"/>
</dbReference>
<dbReference type="InterPro" id="IPR036444">
    <property type="entry name" value="PLipase_A2_dom_sf"/>
</dbReference>
<dbReference type="InterPro" id="IPR033113">
    <property type="entry name" value="PLipase_A2_His_AS"/>
</dbReference>
<dbReference type="PANTHER" id="PTHR11716">
    <property type="entry name" value="PHOSPHOLIPASE A2 FAMILY MEMBER"/>
    <property type="match status" value="1"/>
</dbReference>
<dbReference type="PANTHER" id="PTHR11716:SF9">
    <property type="entry name" value="PHOSPHOLIPASE A2, MEMBRANE ASSOCIATED"/>
    <property type="match status" value="1"/>
</dbReference>
<dbReference type="Pfam" id="PF00068">
    <property type="entry name" value="Phospholip_A2_1"/>
    <property type="match status" value="1"/>
</dbReference>
<dbReference type="PRINTS" id="PR00389">
    <property type="entry name" value="PHPHLIPASEA2"/>
</dbReference>
<dbReference type="SMART" id="SM00085">
    <property type="entry name" value="PA2c"/>
    <property type="match status" value="1"/>
</dbReference>
<dbReference type="SUPFAM" id="SSF48619">
    <property type="entry name" value="Phospholipase A2, PLA2"/>
    <property type="match status" value="1"/>
</dbReference>
<dbReference type="PROSITE" id="PS00119">
    <property type="entry name" value="PA2_ASP"/>
    <property type="match status" value="1"/>
</dbReference>
<dbReference type="PROSITE" id="PS00118">
    <property type="entry name" value="PA2_HIS"/>
    <property type="match status" value="1"/>
</dbReference>
<organism>
    <name type="scientific">Bothrops moojeni</name>
    <name type="common">Lance-headed viper</name>
    <name type="synonym">Caissaca</name>
    <dbReference type="NCBI Taxonomy" id="98334"/>
    <lineage>
        <taxon>Eukaryota</taxon>
        <taxon>Metazoa</taxon>
        <taxon>Chordata</taxon>
        <taxon>Craniata</taxon>
        <taxon>Vertebrata</taxon>
        <taxon>Euteleostomi</taxon>
        <taxon>Lepidosauria</taxon>
        <taxon>Squamata</taxon>
        <taxon>Bifurcata</taxon>
        <taxon>Unidentata</taxon>
        <taxon>Episquamata</taxon>
        <taxon>Toxicofera</taxon>
        <taxon>Serpentes</taxon>
        <taxon>Colubroidea</taxon>
        <taxon>Viperidae</taxon>
        <taxon>Crotalinae</taxon>
        <taxon>Bothrops</taxon>
    </lineage>
</organism>